<proteinExistence type="inferred from homology"/>
<reference key="1">
    <citation type="journal article" date="1996" name="DNA Res.">
        <title>A 718-kb DNA sequence of the Escherichia coli K-12 genome corresponding to the 12.7-28.0 min region on the linkage map.</title>
        <authorList>
            <person name="Oshima T."/>
            <person name="Aiba H."/>
            <person name="Baba T."/>
            <person name="Fujita K."/>
            <person name="Hayashi K."/>
            <person name="Honjo A."/>
            <person name="Ikemoto K."/>
            <person name="Inada T."/>
            <person name="Itoh T."/>
            <person name="Kajihara M."/>
            <person name="Kanai K."/>
            <person name="Kashimoto K."/>
            <person name="Kimura S."/>
            <person name="Kitagawa M."/>
            <person name="Makino K."/>
            <person name="Masuda S."/>
            <person name="Miki T."/>
            <person name="Mizobuchi K."/>
            <person name="Mori H."/>
            <person name="Motomura K."/>
            <person name="Nakamura Y."/>
            <person name="Nashimoto H."/>
            <person name="Nishio Y."/>
            <person name="Saito N."/>
            <person name="Sampei G."/>
            <person name="Seki Y."/>
            <person name="Tagami H."/>
            <person name="Takemoto K."/>
            <person name="Wada C."/>
            <person name="Yamamoto Y."/>
            <person name="Yano M."/>
            <person name="Horiuchi T."/>
        </authorList>
    </citation>
    <scope>NUCLEOTIDE SEQUENCE [LARGE SCALE GENOMIC DNA]</scope>
    <source>
        <strain>K12 / W3110 / ATCC 27325 / DSM 5911</strain>
    </source>
</reference>
<reference key="2">
    <citation type="journal article" date="1997" name="Science">
        <title>The complete genome sequence of Escherichia coli K-12.</title>
        <authorList>
            <person name="Blattner F.R."/>
            <person name="Plunkett G. III"/>
            <person name="Bloch C.A."/>
            <person name="Perna N.T."/>
            <person name="Burland V."/>
            <person name="Riley M."/>
            <person name="Collado-Vides J."/>
            <person name="Glasner J.D."/>
            <person name="Rode C.K."/>
            <person name="Mayhew G.F."/>
            <person name="Gregor J."/>
            <person name="Davis N.W."/>
            <person name="Kirkpatrick H.A."/>
            <person name="Goeden M.A."/>
            <person name="Rose D.J."/>
            <person name="Mau B."/>
            <person name="Shao Y."/>
        </authorList>
    </citation>
    <scope>NUCLEOTIDE SEQUENCE [LARGE SCALE GENOMIC DNA]</scope>
    <source>
        <strain>K12 / MG1655 / ATCC 47076</strain>
    </source>
</reference>
<reference key="3">
    <citation type="journal article" date="2006" name="Mol. Syst. Biol.">
        <title>Highly accurate genome sequences of Escherichia coli K-12 strains MG1655 and W3110.</title>
        <authorList>
            <person name="Hayashi K."/>
            <person name="Morooka N."/>
            <person name="Yamamoto Y."/>
            <person name="Fujita K."/>
            <person name="Isono K."/>
            <person name="Choi S."/>
            <person name="Ohtsubo E."/>
            <person name="Baba T."/>
            <person name="Wanner B.L."/>
            <person name="Mori H."/>
            <person name="Horiuchi T."/>
        </authorList>
    </citation>
    <scope>NUCLEOTIDE SEQUENCE [LARGE SCALE GENOMIC DNA]</scope>
    <source>
        <strain>K12 / W3110 / ATCC 27325 / DSM 5911</strain>
    </source>
</reference>
<feature type="chain" id="PRO_0000168848" description="Protein BeeE">
    <location>
        <begin position="1"/>
        <end position="157"/>
    </location>
</feature>
<name>BEEE_ECOLI</name>
<gene>
    <name type="primary">beeE</name>
    <name type="synonym">ymfO</name>
    <name type="ordered locus">b1151</name>
    <name type="ordered locus">JW1137</name>
</gene>
<dbReference type="EMBL" id="U00096">
    <property type="protein sequence ID" value="AYC08193.1"/>
    <property type="molecule type" value="Genomic_DNA"/>
</dbReference>
<dbReference type="EMBL" id="AP009048">
    <property type="protein sequence ID" value="BAA35977.1"/>
    <property type="molecule type" value="Genomic_DNA"/>
</dbReference>
<dbReference type="PIR" id="D64860">
    <property type="entry name" value="D64860"/>
</dbReference>
<dbReference type="SMR" id="P75980"/>
<dbReference type="BioGRID" id="4262853">
    <property type="interactions" value="9"/>
</dbReference>
<dbReference type="FunCoup" id="P75980">
    <property type="interactions" value="225"/>
</dbReference>
<dbReference type="EnsemblBacteria" id="AYC08193">
    <property type="protein sequence ID" value="AYC08193"/>
    <property type="gene ID" value="b1151"/>
</dbReference>
<dbReference type="KEGG" id="ecj:JW1137"/>
<dbReference type="PATRIC" id="fig|83333.103.peg.1939"/>
<dbReference type="EchoBASE" id="EB4001"/>
<dbReference type="eggNOG" id="COG4695">
    <property type="taxonomic scope" value="Bacteria"/>
</dbReference>
<dbReference type="HOGENOM" id="CLU_097427_1_0_6"/>
<dbReference type="InParanoid" id="P75980"/>
<dbReference type="PhylomeDB" id="P75980"/>
<dbReference type="BioCyc" id="EcoCyc:G6595-MONOMER"/>
<dbReference type="PRO" id="PR:P75980"/>
<dbReference type="Proteomes" id="UP000000625">
    <property type="component" value="Chromosome"/>
</dbReference>
<dbReference type="InterPro" id="IPR006944">
    <property type="entry name" value="Phage/GTA_portal"/>
</dbReference>
<dbReference type="Pfam" id="PF04860">
    <property type="entry name" value="Phage_portal"/>
    <property type="match status" value="1"/>
</dbReference>
<comment type="miscellaneous">
    <text evidence="1">Encoded by the e14 prophage.</text>
</comment>
<comment type="miscellaneous">
    <text evidence="1">Missing up to 260 C-terminal residues compared to orthologs.</text>
</comment>
<comment type="similarity">
    <text evidence="1">Belongs to the phage portal family.</text>
</comment>
<protein>
    <recommendedName>
        <fullName evidence="1">Protein BeeE</fullName>
    </recommendedName>
</protein>
<accession>P75980</accession>
<accession>A0A385XJE3</accession>
<organism>
    <name type="scientific">Escherichia coli (strain K12)</name>
    <dbReference type="NCBI Taxonomy" id="83333"/>
    <lineage>
        <taxon>Bacteria</taxon>
        <taxon>Pseudomonadati</taxon>
        <taxon>Pseudomonadota</taxon>
        <taxon>Gammaproteobacteria</taxon>
        <taxon>Enterobacterales</taxon>
        <taxon>Enterobacteriaceae</taxon>
        <taxon>Escherichia</taxon>
    </lineage>
</organism>
<sequence>MFFSGLFQRKSDAPVTTPAELADAIGLSYDTYTGKQISSQRAMRLTAVFSCVRVLAESVGMLPCNLYHLNGSLKQRATGERLHKLISTHPNGYMTPQEFWELVVTCLCLRGNFYAYKVKAFGEVAELLPVDPGCVVYALGRCQRWPEGDRRECYSAR</sequence>
<keyword id="KW-1185">Reference proteome</keyword>
<evidence type="ECO:0000305" key="1"/>